<protein>
    <recommendedName>
        <fullName evidence="2">K(+)-insensitive pyrophosphate-energized proton pump</fullName>
        <ecNumber evidence="2 3">7.1.3.1</ecNumber>
    </recommendedName>
    <alternativeName>
        <fullName evidence="2">Membrane-bound proton-translocating pyrophosphatase</fullName>
    </alternativeName>
    <alternativeName>
        <fullName evidence="2">Pyrophosphate-energized inorganic pyrophosphatase</fullName>
        <shortName evidence="2">H(+)-PPase</shortName>
    </alternativeName>
</protein>
<comment type="function">
    <text evidence="2 3">Proton pump that utilizes the energy of pyrophosphate hydrolysis as the driving force for proton movement across the membrane. Generates a proton motive force.</text>
</comment>
<comment type="catalytic activity">
    <reaction evidence="2 3">
        <text>diphosphate + H2O + H(+)(in) = 2 phosphate + 2 H(+)(out)</text>
        <dbReference type="Rhea" id="RHEA:13973"/>
        <dbReference type="ChEBI" id="CHEBI:15377"/>
        <dbReference type="ChEBI" id="CHEBI:15378"/>
        <dbReference type="ChEBI" id="CHEBI:33019"/>
        <dbReference type="ChEBI" id="CHEBI:43474"/>
        <dbReference type="EC" id="7.1.3.1"/>
    </reaction>
</comment>
<comment type="cofactor">
    <cofactor evidence="2">
        <name>Mg(2+)</name>
        <dbReference type="ChEBI" id="CHEBI:18420"/>
    </cofactor>
</comment>
<comment type="subunit">
    <text evidence="2">Homodimer.</text>
</comment>
<comment type="subcellular location">
    <subcellularLocation>
        <location evidence="2">Cell membrane</location>
        <topology evidence="2">Multi-pass membrane protein</topology>
    </subcellularLocation>
</comment>
<comment type="similarity">
    <text evidence="2">Belongs to the H(+)-translocating pyrophosphatase (TC 3.A.10) family. K(+)-insensitive subfamily.</text>
</comment>
<dbReference type="EC" id="7.1.3.1" evidence="2 3"/>
<dbReference type="EMBL" id="AL939117">
    <property type="protein sequence ID" value="CAB38484.1"/>
    <property type="molecule type" value="Genomic_DNA"/>
</dbReference>
<dbReference type="PIR" id="T36668">
    <property type="entry name" value="T36668"/>
</dbReference>
<dbReference type="RefSeq" id="NP_627745.1">
    <property type="nucleotide sequence ID" value="NC_003888.3"/>
</dbReference>
<dbReference type="RefSeq" id="WP_011029076.1">
    <property type="nucleotide sequence ID" value="NZ_VNID01000003.1"/>
</dbReference>
<dbReference type="SMR" id="Q9X913"/>
<dbReference type="STRING" id="100226.gene:17761169"/>
<dbReference type="PaxDb" id="100226-SCO3547"/>
<dbReference type="KEGG" id="sco:SCO3547"/>
<dbReference type="PATRIC" id="fig|100226.15.peg.3603"/>
<dbReference type="eggNOG" id="COG3808">
    <property type="taxonomic scope" value="Bacteria"/>
</dbReference>
<dbReference type="HOGENOM" id="CLU_008743_3_1_11"/>
<dbReference type="InParanoid" id="Q9X913"/>
<dbReference type="OrthoDB" id="9808652at2"/>
<dbReference type="PhylomeDB" id="Q9X913"/>
<dbReference type="BRENDA" id="7.1.3.1">
    <property type="organism ID" value="5998"/>
</dbReference>
<dbReference type="Proteomes" id="UP000001973">
    <property type="component" value="Chromosome"/>
</dbReference>
<dbReference type="GO" id="GO:0005886">
    <property type="term" value="C:plasma membrane"/>
    <property type="evidence" value="ECO:0007669"/>
    <property type="project" value="UniProtKB-SubCell"/>
</dbReference>
<dbReference type="GO" id="GO:0009678">
    <property type="term" value="F:diphosphate hydrolysis-driven proton transmembrane transporter activity"/>
    <property type="evidence" value="ECO:0007669"/>
    <property type="project" value="UniProtKB-UniRule"/>
</dbReference>
<dbReference type="GO" id="GO:0004427">
    <property type="term" value="F:inorganic diphosphate phosphatase activity"/>
    <property type="evidence" value="ECO:0007669"/>
    <property type="project" value="UniProtKB-UniRule"/>
</dbReference>
<dbReference type="GO" id="GO:0000287">
    <property type="term" value="F:magnesium ion binding"/>
    <property type="evidence" value="ECO:0007669"/>
    <property type="project" value="UniProtKB-UniRule"/>
</dbReference>
<dbReference type="HAMAP" id="MF_01129">
    <property type="entry name" value="PPase_energized_pump"/>
    <property type="match status" value="1"/>
</dbReference>
<dbReference type="InterPro" id="IPR004131">
    <property type="entry name" value="PPase-energised_H-pump"/>
</dbReference>
<dbReference type="NCBIfam" id="NF001952">
    <property type="entry name" value="PRK00733.1-4"/>
    <property type="match status" value="1"/>
</dbReference>
<dbReference type="NCBIfam" id="NF001960">
    <property type="entry name" value="PRK00733.3-5"/>
    <property type="match status" value="1"/>
</dbReference>
<dbReference type="NCBIfam" id="TIGR01104">
    <property type="entry name" value="V_PPase"/>
    <property type="match status" value="1"/>
</dbReference>
<dbReference type="PANTHER" id="PTHR31998">
    <property type="entry name" value="K(+)-INSENSITIVE PYROPHOSPHATE-ENERGIZED PROTON PUMP"/>
    <property type="match status" value="1"/>
</dbReference>
<dbReference type="Pfam" id="PF03030">
    <property type="entry name" value="H_PPase"/>
    <property type="match status" value="1"/>
</dbReference>
<dbReference type="PIRSF" id="PIRSF001265">
    <property type="entry name" value="H+-PPase"/>
    <property type="match status" value="1"/>
</dbReference>
<sequence length="794" mass="80650">MAELPTSHLAAAVLTDGNRALVAVIAVVALAALVLAGVLVRQVLAAGEGTDSMKKIAAAVQEGANAYLARQLRTLGVFAVVVFFLLMLLPADDWNQRAGRSIFFLIGAAFSAATGYIGMWLAVRSNVRVAAAAREATPAPGEPEKDLALVSHKATKIAFRTGGVVGMFTVGLGLLGACCVVLVYAADAPKVLEGFGLGAALIAMFMRVGGGIFTKAADVGADLVGKVEQGIPEDDPRNAATIADNVGDNVGDCAGMAADLFESYAVTLVAALILGKVAFGDFGLAFPLLVPAIGVLTAMIGIFAVAPRRSDRSGMSAINRGFFISAVISLVLVAVAVFVYLPGKYADLDGVTDAAIAGKSGDPRILALVAVAIGIVLAALIQQLTGYFTETTRRPVKDIGKSSLTGPATVVLAGISLGLESAVYTALLIGLGVYGAFLLGGTSIMLALFAVALAGTGLLTTVGVIVAMDTFGPVSDNAQGIAEMSGDVEGAGAQVLTDLDAVGNTTKAITKGIAIATAVLAAAALFGSYRDAITTGAADVGEKLSGEGAPMTLMMDISQPNNLVGLIAGAAVVFLFSGLAINAVSRSAGAVVYEVRRQFRERPGIMDYSEKPEYGKVVDICTRDALRELATPGLLAVMAPIFIGFTLGVGALGAFLAGAIGAGTLMAVFLANSGGSWDNAKKLVEDGHHGGKGSEAHAATVIGDTVGDPFKDTAGPAINPLLKVMNLVALLIAPAVIKFSYGADKSVVVRVLIAVVAFAVIAAAVYVSKRRGIAMGDEDDADPEPKSADPAVVS</sequence>
<proteinExistence type="evidence at protein level"/>
<reference key="1">
    <citation type="journal article" date="2002" name="Nature">
        <title>Complete genome sequence of the model actinomycete Streptomyces coelicolor A3(2).</title>
        <authorList>
            <person name="Bentley S.D."/>
            <person name="Chater K.F."/>
            <person name="Cerdeno-Tarraga A.-M."/>
            <person name="Challis G.L."/>
            <person name="Thomson N.R."/>
            <person name="James K.D."/>
            <person name="Harris D.E."/>
            <person name="Quail M.A."/>
            <person name="Kieser H."/>
            <person name="Harper D."/>
            <person name="Bateman A."/>
            <person name="Brown S."/>
            <person name="Chandra G."/>
            <person name="Chen C.W."/>
            <person name="Collins M."/>
            <person name="Cronin A."/>
            <person name="Fraser A."/>
            <person name="Goble A."/>
            <person name="Hidalgo J."/>
            <person name="Hornsby T."/>
            <person name="Howarth S."/>
            <person name="Huang C.-H."/>
            <person name="Kieser T."/>
            <person name="Larke L."/>
            <person name="Murphy L.D."/>
            <person name="Oliver K."/>
            <person name="O'Neil S."/>
            <person name="Rabbinowitsch E."/>
            <person name="Rajandream M.A."/>
            <person name="Rutherford K.M."/>
            <person name="Rutter S."/>
            <person name="Seeger K."/>
            <person name="Saunders D."/>
            <person name="Sharp S."/>
            <person name="Squares R."/>
            <person name="Squares S."/>
            <person name="Taylor K."/>
            <person name="Warren T."/>
            <person name="Wietzorrek A."/>
            <person name="Woodward J.R."/>
            <person name="Barrell B.G."/>
            <person name="Parkhill J."/>
            <person name="Hopwood D.A."/>
        </authorList>
    </citation>
    <scope>NUCLEOTIDE SEQUENCE [LARGE SCALE GENOMIC DNA]</scope>
    <source>
        <strain>ATCC BAA-471 / A3(2) / M145</strain>
    </source>
</reference>
<reference key="2">
    <citation type="journal article" date="2009" name="J. Biochem.">
        <title>Functional enhancement by single-residue substitution of Streptomyces coelicolor A3(2) H+-translocating pyrophosphatase.</title>
        <authorList>
            <person name="Hirono M."/>
            <person name="Maeshima M."/>
        </authorList>
    </citation>
    <scope>FUNCTION</scope>
    <scope>CATALYTIC ACTIVITY</scope>
    <scope>MUTAGENESIS OF PHE-388 AND ALA-514</scope>
    <source>
        <strain>A3(2) / NRRL B-16638</strain>
    </source>
</reference>
<evidence type="ECO:0000250" key="1"/>
<evidence type="ECO:0000255" key="2">
    <source>
        <dbReference type="HAMAP-Rule" id="MF_01129"/>
    </source>
</evidence>
<evidence type="ECO:0000269" key="3">
    <source>
    </source>
</evidence>
<gene>
    <name evidence="2" type="primary">hppA</name>
    <name type="ordered locus">SCO3547</name>
    <name type="ORF">SCH5.10c</name>
</gene>
<organism>
    <name type="scientific">Streptomyces coelicolor (strain ATCC BAA-471 / A3(2) / M145)</name>
    <dbReference type="NCBI Taxonomy" id="100226"/>
    <lineage>
        <taxon>Bacteria</taxon>
        <taxon>Bacillati</taxon>
        <taxon>Actinomycetota</taxon>
        <taxon>Actinomycetes</taxon>
        <taxon>Kitasatosporales</taxon>
        <taxon>Streptomycetaceae</taxon>
        <taxon>Streptomyces</taxon>
        <taxon>Streptomyces albidoflavus group</taxon>
    </lineage>
</organism>
<name>HPPA_STRCO</name>
<keyword id="KW-0106">Calcium</keyword>
<keyword id="KW-1003">Cell membrane</keyword>
<keyword id="KW-0375">Hydrogen ion transport</keyword>
<keyword id="KW-0406">Ion transport</keyword>
<keyword id="KW-0460">Magnesium</keyword>
<keyword id="KW-0472">Membrane</keyword>
<keyword id="KW-0479">Metal-binding</keyword>
<keyword id="KW-1185">Reference proteome</keyword>
<keyword id="KW-1278">Translocase</keyword>
<keyword id="KW-0812">Transmembrane</keyword>
<keyword id="KW-1133">Transmembrane helix</keyword>
<keyword id="KW-0813">Transport</keyword>
<accession>Q9X913</accession>
<feature type="chain" id="PRO_0000217032" description="K(+)-insensitive pyrophosphate-energized proton pump">
    <location>
        <begin position="1"/>
        <end position="794"/>
    </location>
</feature>
<feature type="transmembrane region" description="Helical" evidence="2">
    <location>
        <begin position="20"/>
        <end position="40"/>
    </location>
</feature>
<feature type="transmembrane region" description="Helical" evidence="2">
    <location>
        <begin position="74"/>
        <end position="94"/>
    </location>
</feature>
<feature type="transmembrane region" description="Helical" evidence="2">
    <location>
        <begin position="102"/>
        <end position="122"/>
    </location>
</feature>
<feature type="transmembrane region" description="Helical" evidence="2">
    <location>
        <begin position="163"/>
        <end position="183"/>
    </location>
</feature>
<feature type="transmembrane region" description="Helical" evidence="2">
    <location>
        <begin position="194"/>
        <end position="214"/>
    </location>
</feature>
<feature type="transmembrane region" description="Helical" evidence="2">
    <location>
        <begin position="264"/>
        <end position="284"/>
    </location>
</feature>
<feature type="transmembrane region" description="Helical" evidence="2">
    <location>
        <begin position="285"/>
        <end position="305"/>
    </location>
</feature>
<feature type="transmembrane region" description="Helical" evidence="2">
    <location>
        <begin position="321"/>
        <end position="341"/>
    </location>
</feature>
<feature type="transmembrane region" description="Helical" evidence="2">
    <location>
        <begin position="365"/>
        <end position="385"/>
    </location>
</feature>
<feature type="transmembrane region" description="Helical" evidence="2">
    <location>
        <begin position="422"/>
        <end position="442"/>
    </location>
</feature>
<feature type="transmembrane region" description="Helical" evidence="2">
    <location>
        <begin position="446"/>
        <end position="466"/>
    </location>
</feature>
<feature type="transmembrane region" description="Helical" evidence="2">
    <location>
        <begin position="508"/>
        <end position="528"/>
    </location>
</feature>
<feature type="transmembrane region" description="Helical" evidence="2">
    <location>
        <begin position="564"/>
        <end position="584"/>
    </location>
</feature>
<feature type="transmembrane region" description="Helical" evidence="2">
    <location>
        <begin position="641"/>
        <end position="661"/>
    </location>
</feature>
<feature type="transmembrane region" description="Helical" evidence="2">
    <location>
        <begin position="717"/>
        <end position="737"/>
    </location>
</feature>
<feature type="transmembrane region" description="Helical" evidence="2">
    <location>
        <begin position="747"/>
        <end position="767"/>
    </location>
</feature>
<feature type="binding site" evidence="1">
    <location>
        <position position="215"/>
    </location>
    <ligand>
        <name>substrate</name>
    </ligand>
</feature>
<feature type="binding site" evidence="1">
    <location>
        <position position="218"/>
    </location>
    <ligand>
        <name>Mg(2+)</name>
        <dbReference type="ChEBI" id="CHEBI:18420"/>
        <label>1</label>
    </ligand>
</feature>
<feature type="binding site" evidence="1">
    <location>
        <position position="222"/>
    </location>
    <ligand>
        <name>Mg(2+)</name>
        <dbReference type="ChEBI" id="CHEBI:18420"/>
        <label>1</label>
    </ligand>
</feature>
<feature type="binding site" evidence="1">
    <location>
        <position position="245"/>
    </location>
    <ligand>
        <name>Mg(2+)</name>
        <dbReference type="ChEBI" id="CHEBI:18420"/>
        <label>2</label>
    </ligand>
</feature>
<feature type="binding site" evidence="1">
    <location>
        <position position="248"/>
    </location>
    <ligand>
        <name>Mg(2+)</name>
        <dbReference type="ChEBI" id="CHEBI:18420"/>
        <label>2</label>
    </ligand>
</feature>
<feature type="binding site" evidence="1">
    <location>
        <position position="476"/>
    </location>
    <ligand>
        <name>Mg(2+)</name>
        <dbReference type="ChEBI" id="CHEBI:18420"/>
        <label>2</label>
    </ligand>
</feature>
<feature type="binding site" evidence="1">
    <location>
        <position position="678"/>
    </location>
    <ligand>
        <name>Ca(2+)</name>
        <dbReference type="ChEBI" id="CHEBI:29108"/>
    </ligand>
</feature>
<feature type="binding site" evidence="1">
    <location>
        <position position="704"/>
    </location>
    <ligand>
        <name>Ca(2+)</name>
        <dbReference type="ChEBI" id="CHEBI:29108"/>
    </ligand>
</feature>
<feature type="binding site" evidence="1">
    <location>
        <position position="708"/>
    </location>
    <ligand>
        <name>Ca(2+)</name>
        <dbReference type="ChEBI" id="CHEBI:29108"/>
    </ligand>
</feature>
<feature type="binding site" evidence="1">
    <location>
        <position position="711"/>
    </location>
    <ligand>
        <name>substrate</name>
    </ligand>
</feature>
<feature type="site" description="Important for ion transport" evidence="1">
    <location>
        <position position="207"/>
    </location>
</feature>
<feature type="site" description="Important for ion transport" evidence="1">
    <location>
        <position position="252"/>
    </location>
</feature>
<feature type="site" description="Important for ion transport" evidence="1">
    <location>
        <position position="259"/>
    </location>
</feature>
<feature type="site" description="Determinant of potassium independence" evidence="2">
    <location>
        <position position="507"/>
    </location>
</feature>
<feature type="site" description="Important for ion transport" evidence="1">
    <location>
        <position position="712"/>
    </location>
</feature>
<feature type="site" description="Important for ion transport" evidence="1">
    <location>
        <position position="723"/>
    </location>
</feature>
<feature type="mutagenesis site" description="Increased PPase activity and H(+) pump activity. The coupling ratio is approximately two-fold that of the wild-type." evidence="3">
    <original>F</original>
    <variation>Y</variation>
    <location>
        <position position="388"/>
    </location>
</feature>
<feature type="mutagenesis site" description="Increased PPase activity and H(+) pump activity. The coupling ratio is approximately two-fold that of the wild-type." evidence="3">
    <original>A</original>
    <variation>S</variation>
    <location>
        <position position="514"/>
    </location>
</feature>